<protein>
    <recommendedName>
        <fullName>Type II secretion system protein F</fullName>
        <shortName>T2SS protein F</shortName>
    </recommendedName>
    <alternativeName>
        <fullName>Cholera toxin secretion protein EpsF</fullName>
    </alternativeName>
    <alternativeName>
        <fullName>General secretion pathway protein F</fullName>
    </alternativeName>
</protein>
<gene>
    <name type="primary">epsF</name>
    <name type="ordered locus">VC_2731</name>
</gene>
<keyword id="KW-0002">3D-structure</keyword>
<keyword id="KW-0106">Calcium</keyword>
<keyword id="KW-0997">Cell inner membrane</keyword>
<keyword id="KW-1003">Cell membrane</keyword>
<keyword id="KW-0472">Membrane</keyword>
<keyword id="KW-0479">Metal-binding</keyword>
<keyword id="KW-0653">Protein transport</keyword>
<keyword id="KW-1185">Reference proteome</keyword>
<keyword id="KW-0812">Transmembrane</keyword>
<keyword id="KW-1133">Transmembrane helix</keyword>
<keyword id="KW-0813">Transport</keyword>
<comment type="function">
    <text evidence="3">Component of the type II secretion system inner membrane complex required for the energy-dependent secretion of extracellular factors such as proteases and toxins from the periplasm.</text>
</comment>
<comment type="subunit">
    <text evidence="2 3 5">Type II secretion system is composed of four main components: the outer membrane complex, the inner membrane complex, the cytoplasmic secretion ATPase and the periplasm-spanning pseudopilus (By similarity). Homodimer (PubMed:19324092). Interacts with EpsE/GspE and EpsL/GspL components (By similarity).</text>
</comment>
<comment type="subcellular location">
    <subcellularLocation>
        <location evidence="6">Cell inner membrane</location>
        <topology evidence="6">Multi-pass membrane protein</topology>
    </subcellularLocation>
</comment>
<comment type="similarity">
    <text evidence="6">Belongs to the GSP F family.</text>
</comment>
<reference key="1">
    <citation type="thesis" date="1994" institute="Michigan State University" country="United States">
        <title>Organization of the general secretion pathway genes in Vibrio cholerae.</title>
        <authorList>
            <person name="Overbye L.J."/>
        </authorList>
    </citation>
    <scope>NUCLEOTIDE SEQUENCE [GENOMIC DNA]</scope>
    <source>
        <strain>El Tor TRH7000</strain>
    </source>
</reference>
<reference key="2">
    <citation type="journal article" date="2000" name="Nature">
        <title>DNA sequence of both chromosomes of the cholera pathogen Vibrio cholerae.</title>
        <authorList>
            <person name="Heidelberg J.F."/>
            <person name="Eisen J.A."/>
            <person name="Nelson W.C."/>
            <person name="Clayton R.A."/>
            <person name="Gwinn M.L."/>
            <person name="Dodson R.J."/>
            <person name="Haft D.H."/>
            <person name="Hickey E.K."/>
            <person name="Peterson J.D."/>
            <person name="Umayam L.A."/>
            <person name="Gill S.R."/>
            <person name="Nelson K.E."/>
            <person name="Read T.D."/>
            <person name="Tettelin H."/>
            <person name="Richardson D.L."/>
            <person name="Ermolaeva M.D."/>
            <person name="Vamathevan J.J."/>
            <person name="Bass S."/>
            <person name="Qin H."/>
            <person name="Dragoi I."/>
            <person name="Sellers P."/>
            <person name="McDonald L.A."/>
            <person name="Utterback T.R."/>
            <person name="Fleischmann R.D."/>
            <person name="Nierman W.C."/>
            <person name="White O."/>
            <person name="Salzberg S.L."/>
            <person name="Smith H.O."/>
            <person name="Colwell R.R."/>
            <person name="Mekalanos J.J."/>
            <person name="Venter J.C."/>
            <person name="Fraser C.M."/>
        </authorList>
    </citation>
    <scope>NUCLEOTIDE SEQUENCE [LARGE SCALE GENOMIC DNA]</scope>
    <source>
        <strain>ATCC 39315 / El Tor Inaba N16961</strain>
    </source>
</reference>
<reference key="3">
    <citation type="journal article" date="2009" name="J. Struct. Biol.">
        <title>The three-dimensional structure of the cytoplasmic domains of EpsF from the type 2 secretion system of Vibrio cholerae.</title>
        <authorList>
            <person name="Abendroth J."/>
            <person name="Mitchell D.D."/>
            <person name="Korotkov K.V."/>
            <person name="Johnson T.L."/>
            <person name="Kreger A."/>
            <person name="Sandkvist M."/>
            <person name="Hol W.G."/>
        </authorList>
    </citation>
    <scope>X-RAY CRYSTALLOGRAPHY (1.70 ANGSTROMS) OF 56-170 IN COMPLEX WITH CALCIUM</scope>
    <scope>SUBUNIT</scope>
</reference>
<proteinExistence type="evidence at protein level"/>
<name>GSPF_VIBCH</name>
<dbReference type="EMBL" id="L33796">
    <property type="protein sequence ID" value="AAA58787.1"/>
    <property type="molecule type" value="Genomic_DNA"/>
</dbReference>
<dbReference type="EMBL" id="AE003852">
    <property type="protein sequence ID" value="AAF95871.1"/>
    <property type="molecule type" value="Genomic_DNA"/>
</dbReference>
<dbReference type="PIR" id="E82041">
    <property type="entry name" value="E82041"/>
</dbReference>
<dbReference type="RefSeq" id="NP_232358.1">
    <property type="nucleotide sequence ID" value="NC_002505.1"/>
</dbReference>
<dbReference type="PDB" id="2VMA">
    <property type="method" value="X-ray"/>
    <property type="resolution" value="1.90 A"/>
    <property type="chains" value="A/B=56-170"/>
</dbReference>
<dbReference type="PDB" id="2VMB">
    <property type="method" value="X-ray"/>
    <property type="resolution" value="1.95 A"/>
    <property type="chains" value="A/B=56-170"/>
</dbReference>
<dbReference type="PDB" id="3C1Q">
    <property type="method" value="X-ray"/>
    <property type="resolution" value="1.70 A"/>
    <property type="chains" value="A/B=56-170"/>
</dbReference>
<dbReference type="PDBsum" id="2VMA"/>
<dbReference type="PDBsum" id="2VMB"/>
<dbReference type="PDBsum" id="3C1Q"/>
<dbReference type="SMR" id="P45780"/>
<dbReference type="STRING" id="243277.VC_2731"/>
<dbReference type="DNASU" id="2614894"/>
<dbReference type="EnsemblBacteria" id="AAF95871">
    <property type="protein sequence ID" value="AAF95871"/>
    <property type="gene ID" value="VC_2731"/>
</dbReference>
<dbReference type="KEGG" id="vch:VC_2731"/>
<dbReference type="PATRIC" id="fig|243277.26.peg.2606"/>
<dbReference type="eggNOG" id="COG1459">
    <property type="taxonomic scope" value="Bacteria"/>
</dbReference>
<dbReference type="HOGENOM" id="CLU_035032_0_1_6"/>
<dbReference type="EvolutionaryTrace" id="P45780"/>
<dbReference type="Proteomes" id="UP000000584">
    <property type="component" value="Chromosome 1"/>
</dbReference>
<dbReference type="GO" id="GO:0005886">
    <property type="term" value="C:plasma membrane"/>
    <property type="evidence" value="ECO:0000318"/>
    <property type="project" value="GO_Central"/>
</dbReference>
<dbReference type="GO" id="GO:0015627">
    <property type="term" value="C:type II protein secretion system complex"/>
    <property type="evidence" value="ECO:0007669"/>
    <property type="project" value="InterPro"/>
</dbReference>
<dbReference type="GO" id="GO:0046872">
    <property type="term" value="F:metal ion binding"/>
    <property type="evidence" value="ECO:0007669"/>
    <property type="project" value="UniProtKB-KW"/>
</dbReference>
<dbReference type="GO" id="GO:0015628">
    <property type="term" value="P:protein secretion by the type II secretion system"/>
    <property type="evidence" value="ECO:0000318"/>
    <property type="project" value="GO_Central"/>
</dbReference>
<dbReference type="FunFam" id="1.20.81.30:FF:000001">
    <property type="entry name" value="Type II secretion system protein F"/>
    <property type="match status" value="2"/>
</dbReference>
<dbReference type="Gene3D" id="1.20.81.30">
    <property type="entry name" value="Type II secretion system (T2SS), domain F"/>
    <property type="match status" value="2"/>
</dbReference>
<dbReference type="InterPro" id="IPR003004">
    <property type="entry name" value="GspF/PilC"/>
</dbReference>
<dbReference type="InterPro" id="IPR011850">
    <property type="entry name" value="T2SS_GspF"/>
</dbReference>
<dbReference type="InterPro" id="IPR001992">
    <property type="entry name" value="T2SS_GspF/T4SS_PilC_CS"/>
</dbReference>
<dbReference type="InterPro" id="IPR018076">
    <property type="entry name" value="T2SS_GspF_dom"/>
</dbReference>
<dbReference type="InterPro" id="IPR042094">
    <property type="entry name" value="T2SS_GspF_sf"/>
</dbReference>
<dbReference type="NCBIfam" id="TIGR02120">
    <property type="entry name" value="GspF"/>
    <property type="match status" value="1"/>
</dbReference>
<dbReference type="PANTHER" id="PTHR30012">
    <property type="entry name" value="GENERAL SECRETION PATHWAY PROTEIN"/>
    <property type="match status" value="1"/>
</dbReference>
<dbReference type="PANTHER" id="PTHR30012:SF0">
    <property type="entry name" value="TYPE II SECRETION SYSTEM PROTEIN F-RELATED"/>
    <property type="match status" value="1"/>
</dbReference>
<dbReference type="Pfam" id="PF00482">
    <property type="entry name" value="T2SSF"/>
    <property type="match status" value="2"/>
</dbReference>
<dbReference type="PRINTS" id="PR00812">
    <property type="entry name" value="BCTERIALGSPF"/>
</dbReference>
<dbReference type="PROSITE" id="PS00874">
    <property type="entry name" value="T2SP_F"/>
    <property type="match status" value="1"/>
</dbReference>
<accession>P45780</accession>
<accession>Q9JPZ5</accession>
<organism>
    <name type="scientific">Vibrio cholerae serotype O1 (strain ATCC 39315 / El Tor Inaba N16961)</name>
    <dbReference type="NCBI Taxonomy" id="243277"/>
    <lineage>
        <taxon>Bacteria</taxon>
        <taxon>Pseudomonadati</taxon>
        <taxon>Pseudomonadota</taxon>
        <taxon>Gammaproteobacteria</taxon>
        <taxon>Vibrionales</taxon>
        <taxon>Vibrionaceae</taxon>
        <taxon>Vibrio</taxon>
    </lineage>
</organism>
<feature type="chain" id="PRO_0000207836" description="Type II secretion system protein F">
    <location>
        <begin position="1"/>
        <end position="406"/>
    </location>
</feature>
<feature type="topological domain" description="Cytoplasmic" evidence="2">
    <location>
        <begin position="1"/>
        <end position="171"/>
    </location>
</feature>
<feature type="transmembrane region" description="Helical" evidence="4">
    <location>
        <begin position="172"/>
        <end position="192"/>
    </location>
</feature>
<feature type="topological domain" description="Periplasmic" evidence="2">
    <location>
        <begin position="193"/>
        <end position="223"/>
    </location>
</feature>
<feature type="transmembrane region" description="Helical" evidence="4">
    <location>
        <begin position="224"/>
        <end position="244"/>
    </location>
</feature>
<feature type="topological domain" description="Cytoplasmic" evidence="2">
    <location>
        <begin position="245"/>
        <end position="368"/>
    </location>
</feature>
<feature type="transmembrane region" description="Helical" evidence="4">
    <location>
        <begin position="369"/>
        <end position="389"/>
    </location>
</feature>
<feature type="topological domain" description="Periplasmic" evidence="1">
    <location>
        <begin position="390"/>
        <end position="406"/>
    </location>
</feature>
<feature type="binding site" evidence="7 8">
    <location>
        <position position="97"/>
    </location>
    <ligand>
        <name>Ca(2+)</name>
        <dbReference type="ChEBI" id="CHEBI:29108"/>
    </ligand>
</feature>
<feature type="binding site" evidence="7 8">
    <location>
        <position position="151"/>
    </location>
    <ligand>
        <name>Ca(2+)</name>
        <dbReference type="ChEBI" id="CHEBI:29108"/>
    </ligand>
</feature>
<feature type="binding site" evidence="7 8">
    <location>
        <position position="155"/>
    </location>
    <ligand>
        <name>Ca(2+)</name>
        <dbReference type="ChEBI" id="CHEBI:29108"/>
    </ligand>
</feature>
<feature type="helix" evidence="9">
    <location>
        <begin position="65"/>
        <end position="80"/>
    </location>
</feature>
<feature type="helix" evidence="9">
    <location>
        <begin position="85"/>
        <end position="94"/>
    </location>
</feature>
<feature type="helix" evidence="9">
    <location>
        <begin position="99"/>
        <end position="113"/>
    </location>
</feature>
<feature type="helix" evidence="9">
    <location>
        <begin position="118"/>
        <end position="122"/>
    </location>
</feature>
<feature type="turn" evidence="9">
    <location>
        <begin position="126"/>
        <end position="128"/>
    </location>
</feature>
<feature type="helix" evidence="9">
    <location>
        <begin position="131"/>
        <end position="143"/>
    </location>
</feature>
<feature type="helix" evidence="9">
    <location>
        <begin position="146"/>
        <end position="168"/>
    </location>
</feature>
<evidence type="ECO:0000250" key="1">
    <source>
        <dbReference type="UniProtKB" id="P41441"/>
    </source>
</evidence>
<evidence type="ECO:0000250" key="2">
    <source>
        <dbReference type="UniProtKB" id="Q00513"/>
    </source>
</evidence>
<evidence type="ECO:0000250" key="3">
    <source>
        <dbReference type="UniProtKB" id="Q00514"/>
    </source>
</evidence>
<evidence type="ECO:0000255" key="4"/>
<evidence type="ECO:0000269" key="5">
    <source>
    </source>
</evidence>
<evidence type="ECO:0000305" key="6"/>
<evidence type="ECO:0007744" key="7">
    <source>
        <dbReference type="PDB" id="2VMA"/>
    </source>
</evidence>
<evidence type="ECO:0007744" key="8">
    <source>
        <dbReference type="PDB" id="2VMB"/>
    </source>
</evidence>
<evidence type="ECO:0007829" key="9">
    <source>
        <dbReference type="PDB" id="3C1Q"/>
    </source>
</evidence>
<sequence length="406" mass="44931">MAAFEYKALDAKGRHKKGVIEGDNARQVRQRLKEQSLVPMEVVETQVKAARSRSQGFAFKRGISTPDLALITRQLATLVQSGMPLEECLRAVAEQSEKPRIRTMLVAVRAKVTEGYTLSDSLGDYPHVFDELFRSMVAAGEKSGHLDSVLERLADYAENRQKMRSKLQQAMIYPVVLVVFAVGIVAFLLAAVVPKIVGQFVQMGQALPASTQFLLDASDFLQHWGISLLVGLLMLIYLVRWLLTKPDIRLRWDRRVISLPVIGKIARGLNTARFARTLSICTSSAIPILDGMRVAVDVMTNQFVKQQVLAAAENVREGSSLRKALEQTKLFPPMMLHMIASGEQSGELEGMLTRAADNQDNSFESTVNIALGIFTPALIALMAGMVLFIVMATLMPILEMNNLMSR</sequence>